<comment type="function">
    <text evidence="1">Catalyzes the decarboxylation of four acetate groups of uroporphyrinogen-III to yield coproporphyrinogen-III.</text>
</comment>
<comment type="catalytic activity">
    <reaction evidence="1">
        <text>uroporphyrinogen III + 4 H(+) = coproporphyrinogen III + 4 CO2</text>
        <dbReference type="Rhea" id="RHEA:19865"/>
        <dbReference type="ChEBI" id="CHEBI:15378"/>
        <dbReference type="ChEBI" id="CHEBI:16526"/>
        <dbReference type="ChEBI" id="CHEBI:57308"/>
        <dbReference type="ChEBI" id="CHEBI:57309"/>
        <dbReference type="EC" id="4.1.1.37"/>
    </reaction>
</comment>
<comment type="pathway">
    <text evidence="1">Porphyrin-containing compound metabolism; protoporphyrin-IX biosynthesis; coproporphyrinogen-III from 5-aminolevulinate: step 4/4.</text>
</comment>
<comment type="subunit">
    <text evidence="1">Homodimer.</text>
</comment>
<comment type="subcellular location">
    <subcellularLocation>
        <location evidence="1">Cytoplasm</location>
    </subcellularLocation>
</comment>
<comment type="similarity">
    <text evidence="1">Belongs to the uroporphyrinogen decarboxylase family.</text>
</comment>
<accession>Q4ZZD8</accession>
<protein>
    <recommendedName>
        <fullName evidence="1">Uroporphyrinogen decarboxylase</fullName>
        <shortName evidence="1">UPD</shortName>
        <shortName evidence="1">URO-D</shortName>
        <ecNumber evidence="1">4.1.1.37</ecNumber>
    </recommendedName>
</protein>
<gene>
    <name evidence="1" type="primary">hemE</name>
    <name type="ordered locus">Psyr_0414</name>
</gene>
<name>DCUP_PSEU2</name>
<organism>
    <name type="scientific">Pseudomonas syringae pv. syringae (strain B728a)</name>
    <dbReference type="NCBI Taxonomy" id="205918"/>
    <lineage>
        <taxon>Bacteria</taxon>
        <taxon>Pseudomonadati</taxon>
        <taxon>Pseudomonadota</taxon>
        <taxon>Gammaproteobacteria</taxon>
        <taxon>Pseudomonadales</taxon>
        <taxon>Pseudomonadaceae</taxon>
        <taxon>Pseudomonas</taxon>
        <taxon>Pseudomonas syringae</taxon>
    </lineage>
</organism>
<proteinExistence type="inferred from homology"/>
<evidence type="ECO:0000255" key="1">
    <source>
        <dbReference type="HAMAP-Rule" id="MF_00218"/>
    </source>
</evidence>
<sequence>MTALKNDRFLRALLKQPVDVTPVWMMRQAGRYLPEYRASRASAGDFMSLCKNPQFACEVTLQPLDRYPLDAAILFSDILTIPDAMGQGLYFETGEGPRFRKTVSTLADIEALPIPDAQQDLGYVMDAVSTIRRELNGRVPLIGFAGSPWTLATYMVEGGSSKDFRKSKAMLYDNPQAMHLLLDKLAQSVTSYLNGQILAGAQAVQIFDSWGGSLSSAAYQEFSLAYMRKIVSGLIRENDGRKVPVIVFTKGGGLWLESIADIGADTLGLDWTCDIGEARQRVGSKVSLQGNMDPTVLYARPEAIRQEVARILASYGSGTGHVFNLGHGITPEVDPANAGAFINAVHELSAQYHV</sequence>
<keyword id="KW-0963">Cytoplasm</keyword>
<keyword id="KW-0210">Decarboxylase</keyword>
<keyword id="KW-0456">Lyase</keyword>
<keyword id="KW-0627">Porphyrin biosynthesis</keyword>
<dbReference type="EC" id="4.1.1.37" evidence="1"/>
<dbReference type="EMBL" id="CP000075">
    <property type="protein sequence ID" value="AAY35484.1"/>
    <property type="molecule type" value="Genomic_DNA"/>
</dbReference>
<dbReference type="RefSeq" id="WP_003403024.1">
    <property type="nucleotide sequence ID" value="NC_007005.1"/>
</dbReference>
<dbReference type="RefSeq" id="YP_233522.1">
    <property type="nucleotide sequence ID" value="NC_007005.1"/>
</dbReference>
<dbReference type="SMR" id="Q4ZZD8"/>
<dbReference type="STRING" id="205918.Psyr_0414"/>
<dbReference type="KEGG" id="psb:Psyr_0414"/>
<dbReference type="PATRIC" id="fig|205918.7.peg.430"/>
<dbReference type="eggNOG" id="COG0407">
    <property type="taxonomic scope" value="Bacteria"/>
</dbReference>
<dbReference type="HOGENOM" id="CLU_040933_0_0_6"/>
<dbReference type="OrthoDB" id="9806656at2"/>
<dbReference type="UniPathway" id="UPA00251">
    <property type="reaction ID" value="UER00321"/>
</dbReference>
<dbReference type="Proteomes" id="UP000000426">
    <property type="component" value="Chromosome"/>
</dbReference>
<dbReference type="GO" id="GO:0005829">
    <property type="term" value="C:cytosol"/>
    <property type="evidence" value="ECO:0007669"/>
    <property type="project" value="TreeGrafter"/>
</dbReference>
<dbReference type="GO" id="GO:0004853">
    <property type="term" value="F:uroporphyrinogen decarboxylase activity"/>
    <property type="evidence" value="ECO:0007669"/>
    <property type="project" value="UniProtKB-UniRule"/>
</dbReference>
<dbReference type="GO" id="GO:0019353">
    <property type="term" value="P:protoporphyrinogen IX biosynthetic process from glutamate"/>
    <property type="evidence" value="ECO:0007669"/>
    <property type="project" value="TreeGrafter"/>
</dbReference>
<dbReference type="CDD" id="cd00717">
    <property type="entry name" value="URO-D"/>
    <property type="match status" value="1"/>
</dbReference>
<dbReference type="FunFam" id="3.20.20.210:FF:000001">
    <property type="entry name" value="Uroporphyrinogen decarboxylase"/>
    <property type="match status" value="1"/>
</dbReference>
<dbReference type="Gene3D" id="3.20.20.210">
    <property type="match status" value="1"/>
</dbReference>
<dbReference type="HAMAP" id="MF_00218">
    <property type="entry name" value="URO_D"/>
    <property type="match status" value="1"/>
</dbReference>
<dbReference type="InterPro" id="IPR038071">
    <property type="entry name" value="UROD/MetE-like_sf"/>
</dbReference>
<dbReference type="InterPro" id="IPR006361">
    <property type="entry name" value="Uroporphyrinogen_deCO2ase_HemE"/>
</dbReference>
<dbReference type="InterPro" id="IPR000257">
    <property type="entry name" value="Uroporphyrinogen_deCOase"/>
</dbReference>
<dbReference type="NCBIfam" id="TIGR01464">
    <property type="entry name" value="hemE"/>
    <property type="match status" value="1"/>
</dbReference>
<dbReference type="PANTHER" id="PTHR21091">
    <property type="entry name" value="METHYLTETRAHYDROFOLATE:HOMOCYSTEINE METHYLTRANSFERASE RELATED"/>
    <property type="match status" value="1"/>
</dbReference>
<dbReference type="PANTHER" id="PTHR21091:SF169">
    <property type="entry name" value="UROPORPHYRINOGEN DECARBOXYLASE"/>
    <property type="match status" value="1"/>
</dbReference>
<dbReference type="Pfam" id="PF01208">
    <property type="entry name" value="URO-D"/>
    <property type="match status" value="1"/>
</dbReference>
<dbReference type="SUPFAM" id="SSF51726">
    <property type="entry name" value="UROD/MetE-like"/>
    <property type="match status" value="1"/>
</dbReference>
<dbReference type="PROSITE" id="PS00906">
    <property type="entry name" value="UROD_1"/>
    <property type="match status" value="1"/>
</dbReference>
<dbReference type="PROSITE" id="PS00907">
    <property type="entry name" value="UROD_2"/>
    <property type="match status" value="1"/>
</dbReference>
<feature type="chain" id="PRO_1000023953" description="Uroporphyrinogen decarboxylase">
    <location>
        <begin position="1"/>
        <end position="354"/>
    </location>
</feature>
<feature type="binding site" evidence="1">
    <location>
        <begin position="27"/>
        <end position="31"/>
    </location>
    <ligand>
        <name>substrate</name>
    </ligand>
</feature>
<feature type="binding site" evidence="1">
    <location>
        <position position="77"/>
    </location>
    <ligand>
        <name>substrate</name>
    </ligand>
</feature>
<feature type="binding site" evidence="1">
    <location>
        <position position="154"/>
    </location>
    <ligand>
        <name>substrate</name>
    </ligand>
</feature>
<feature type="binding site" evidence="1">
    <location>
        <position position="209"/>
    </location>
    <ligand>
        <name>substrate</name>
    </ligand>
</feature>
<feature type="binding site" evidence="1">
    <location>
        <position position="327"/>
    </location>
    <ligand>
        <name>substrate</name>
    </ligand>
</feature>
<feature type="site" description="Transition state stabilizer" evidence="1">
    <location>
        <position position="77"/>
    </location>
</feature>
<reference key="1">
    <citation type="journal article" date="2005" name="Proc. Natl. Acad. Sci. U.S.A.">
        <title>Comparison of the complete genome sequences of Pseudomonas syringae pv. syringae B728a and pv. tomato DC3000.</title>
        <authorList>
            <person name="Feil H."/>
            <person name="Feil W.S."/>
            <person name="Chain P."/>
            <person name="Larimer F."/>
            <person name="Dibartolo G."/>
            <person name="Copeland A."/>
            <person name="Lykidis A."/>
            <person name="Trong S."/>
            <person name="Nolan M."/>
            <person name="Goltsman E."/>
            <person name="Thiel J."/>
            <person name="Malfatti S."/>
            <person name="Loper J.E."/>
            <person name="Lapidus A."/>
            <person name="Detter J.C."/>
            <person name="Land M."/>
            <person name="Richardson P.M."/>
            <person name="Kyrpides N.C."/>
            <person name="Ivanova N."/>
            <person name="Lindow S.E."/>
        </authorList>
    </citation>
    <scope>NUCLEOTIDE SEQUENCE [LARGE SCALE GENOMIC DNA]</scope>
    <source>
        <strain>B728a</strain>
    </source>
</reference>